<sequence>MAWFFAPEPVMVTADEALKGGRHPVLENPAPHTVLGTPVTGPWKEGQQRIWIGLGCFWGVEQMYWQMDGVEGTSVGYAGGFTPNPTYREVCSGRTGHTEIVEVVYDPSKISLEQLVARGLEAHDPTQGFRQGNDVGTQYRSAYYTENEEDAARVKAVVDAYGETLKQHGFGEITTEIGVISPSEYFLAEDYHQQYLDKNPDGYCPHHSTGIPCGVEA</sequence>
<dbReference type="EC" id="1.8.4.11" evidence="1"/>
<dbReference type="EMBL" id="AP009044">
    <property type="protein sequence ID" value="BAF55849.1"/>
    <property type="molecule type" value="Genomic_DNA"/>
</dbReference>
<dbReference type="RefSeq" id="WP_003857725.1">
    <property type="nucleotide sequence ID" value="NC_009342.1"/>
</dbReference>
<dbReference type="SMR" id="A4QHY3"/>
<dbReference type="KEGG" id="cgt:cgR_2830"/>
<dbReference type="HOGENOM" id="CLU_031040_10_3_11"/>
<dbReference type="PhylomeDB" id="A4QHY3"/>
<dbReference type="Proteomes" id="UP000006698">
    <property type="component" value="Chromosome"/>
</dbReference>
<dbReference type="GO" id="GO:0005737">
    <property type="term" value="C:cytoplasm"/>
    <property type="evidence" value="ECO:0007669"/>
    <property type="project" value="TreeGrafter"/>
</dbReference>
<dbReference type="GO" id="GO:0036456">
    <property type="term" value="F:L-methionine-(S)-S-oxide reductase activity"/>
    <property type="evidence" value="ECO:0007669"/>
    <property type="project" value="TreeGrafter"/>
</dbReference>
<dbReference type="GO" id="GO:0008113">
    <property type="term" value="F:peptide-methionine (S)-S-oxide reductase activity"/>
    <property type="evidence" value="ECO:0007669"/>
    <property type="project" value="UniProtKB-UniRule"/>
</dbReference>
<dbReference type="GO" id="GO:0034599">
    <property type="term" value="P:cellular response to oxidative stress"/>
    <property type="evidence" value="ECO:0007669"/>
    <property type="project" value="TreeGrafter"/>
</dbReference>
<dbReference type="GO" id="GO:0036211">
    <property type="term" value="P:protein modification process"/>
    <property type="evidence" value="ECO:0007669"/>
    <property type="project" value="UniProtKB-UniRule"/>
</dbReference>
<dbReference type="Gene3D" id="3.30.1060.10">
    <property type="entry name" value="Peptide methionine sulphoxide reductase MsrA"/>
    <property type="match status" value="1"/>
</dbReference>
<dbReference type="HAMAP" id="MF_01401">
    <property type="entry name" value="MsrA"/>
    <property type="match status" value="1"/>
</dbReference>
<dbReference type="InterPro" id="IPR002569">
    <property type="entry name" value="Met_Sox_Rdtase_MsrA_dom"/>
</dbReference>
<dbReference type="InterPro" id="IPR036509">
    <property type="entry name" value="Met_Sox_Rdtase_MsrA_sf"/>
</dbReference>
<dbReference type="InterPro" id="IPR050162">
    <property type="entry name" value="MsrA_MetSO_reductase"/>
</dbReference>
<dbReference type="NCBIfam" id="TIGR00401">
    <property type="entry name" value="msrA"/>
    <property type="match status" value="1"/>
</dbReference>
<dbReference type="PANTHER" id="PTHR42799">
    <property type="entry name" value="MITOCHONDRIAL PEPTIDE METHIONINE SULFOXIDE REDUCTASE"/>
    <property type="match status" value="1"/>
</dbReference>
<dbReference type="PANTHER" id="PTHR42799:SF2">
    <property type="entry name" value="MITOCHONDRIAL PEPTIDE METHIONINE SULFOXIDE REDUCTASE"/>
    <property type="match status" value="1"/>
</dbReference>
<dbReference type="Pfam" id="PF01625">
    <property type="entry name" value="PMSR"/>
    <property type="match status" value="1"/>
</dbReference>
<dbReference type="SUPFAM" id="SSF55068">
    <property type="entry name" value="Peptide methionine sulfoxide reductase"/>
    <property type="match status" value="1"/>
</dbReference>
<keyword id="KW-0560">Oxidoreductase</keyword>
<accession>A4QHY3</accession>
<protein>
    <recommendedName>
        <fullName evidence="1">Peptide methionine sulfoxide reductase MsrA</fullName>
        <shortName evidence="1">Protein-methionine-S-oxide reductase</shortName>
        <ecNumber evidence="1">1.8.4.11</ecNumber>
    </recommendedName>
    <alternativeName>
        <fullName evidence="1">Peptide-methionine (S)-S-oxide reductase</fullName>
        <shortName evidence="1">Peptide Met(O) reductase</shortName>
    </alternativeName>
</protein>
<name>MSRA_CORGB</name>
<proteinExistence type="inferred from homology"/>
<reference key="1">
    <citation type="journal article" date="2007" name="Microbiology">
        <title>Comparative analysis of the Corynebacterium glutamicum group and complete genome sequence of strain R.</title>
        <authorList>
            <person name="Yukawa H."/>
            <person name="Omumasaba C.A."/>
            <person name="Nonaka H."/>
            <person name="Kos P."/>
            <person name="Okai N."/>
            <person name="Suzuki N."/>
            <person name="Suda M."/>
            <person name="Tsuge Y."/>
            <person name="Watanabe J."/>
            <person name="Ikeda Y."/>
            <person name="Vertes A.A."/>
            <person name="Inui M."/>
        </authorList>
    </citation>
    <scope>NUCLEOTIDE SEQUENCE [LARGE SCALE GENOMIC DNA]</scope>
    <source>
        <strain>R</strain>
    </source>
</reference>
<gene>
    <name evidence="1" type="primary">msrA</name>
    <name type="ordered locus">cgR_2830</name>
</gene>
<organism>
    <name type="scientific">Corynebacterium glutamicum (strain R)</name>
    <dbReference type="NCBI Taxonomy" id="340322"/>
    <lineage>
        <taxon>Bacteria</taxon>
        <taxon>Bacillati</taxon>
        <taxon>Actinomycetota</taxon>
        <taxon>Actinomycetes</taxon>
        <taxon>Mycobacteriales</taxon>
        <taxon>Corynebacteriaceae</taxon>
        <taxon>Corynebacterium</taxon>
    </lineage>
</organism>
<evidence type="ECO:0000255" key="1">
    <source>
        <dbReference type="HAMAP-Rule" id="MF_01401"/>
    </source>
</evidence>
<comment type="function">
    <text evidence="1">Has an important function as a repair enzyme for proteins that have been inactivated by oxidation. Catalyzes the reversible oxidation-reduction of methionine sulfoxide in proteins to methionine.</text>
</comment>
<comment type="catalytic activity">
    <reaction evidence="1">
        <text>L-methionyl-[protein] + [thioredoxin]-disulfide + H2O = L-methionyl-(S)-S-oxide-[protein] + [thioredoxin]-dithiol</text>
        <dbReference type="Rhea" id="RHEA:14217"/>
        <dbReference type="Rhea" id="RHEA-COMP:10698"/>
        <dbReference type="Rhea" id="RHEA-COMP:10700"/>
        <dbReference type="Rhea" id="RHEA-COMP:12313"/>
        <dbReference type="Rhea" id="RHEA-COMP:12315"/>
        <dbReference type="ChEBI" id="CHEBI:15377"/>
        <dbReference type="ChEBI" id="CHEBI:16044"/>
        <dbReference type="ChEBI" id="CHEBI:29950"/>
        <dbReference type="ChEBI" id="CHEBI:44120"/>
        <dbReference type="ChEBI" id="CHEBI:50058"/>
        <dbReference type="EC" id="1.8.4.11"/>
    </reaction>
</comment>
<comment type="catalytic activity">
    <reaction evidence="1">
        <text>[thioredoxin]-disulfide + L-methionine + H2O = L-methionine (S)-S-oxide + [thioredoxin]-dithiol</text>
        <dbReference type="Rhea" id="RHEA:19993"/>
        <dbReference type="Rhea" id="RHEA-COMP:10698"/>
        <dbReference type="Rhea" id="RHEA-COMP:10700"/>
        <dbReference type="ChEBI" id="CHEBI:15377"/>
        <dbReference type="ChEBI" id="CHEBI:29950"/>
        <dbReference type="ChEBI" id="CHEBI:50058"/>
        <dbReference type="ChEBI" id="CHEBI:57844"/>
        <dbReference type="ChEBI" id="CHEBI:58772"/>
        <dbReference type="EC" id="1.8.4.11"/>
    </reaction>
</comment>
<comment type="similarity">
    <text evidence="1">Belongs to the MsrA Met sulfoxide reductase family.</text>
</comment>
<feature type="chain" id="PRO_1000068323" description="Peptide methionine sulfoxide reductase MsrA">
    <location>
        <begin position="1"/>
        <end position="217"/>
    </location>
</feature>
<feature type="active site" evidence="1">
    <location>
        <position position="56"/>
    </location>
</feature>